<protein>
    <recommendedName>
        <fullName>Potassium voltage-gated channel subfamily E member 1</fullName>
    </recommendedName>
    <alternativeName>
        <fullName>Delayed rectifier potassium channel subunit IsK</fullName>
    </alternativeName>
    <alternativeName>
        <fullName>IKs producing slow voltage-gated potassium channel subunit beta Mink</fullName>
    </alternativeName>
    <alternativeName>
        <fullName>Minimal potassium channel</fullName>
    </alternativeName>
</protein>
<name>KCNE1_PIG</name>
<dbReference type="EMBL" id="AB032575">
    <property type="protein sequence ID" value="BAA86982.1"/>
    <property type="molecule type" value="mRNA"/>
</dbReference>
<dbReference type="RefSeq" id="NP_999330.1">
    <property type="nucleotide sequence ID" value="NM_214165.1"/>
</dbReference>
<dbReference type="SMR" id="Q9TUH9"/>
<dbReference type="GlyCosmos" id="Q9TUH9">
    <property type="glycosylation" value="2 sites, No reported glycans"/>
</dbReference>
<dbReference type="GlyGen" id="Q9TUH9">
    <property type="glycosylation" value="2 sites"/>
</dbReference>
<dbReference type="GeneID" id="100621502"/>
<dbReference type="CTD" id="3753"/>
<dbReference type="InParanoid" id="Q9TUH9"/>
<dbReference type="OrthoDB" id="8772344at2759"/>
<dbReference type="Proteomes" id="UP000008227">
    <property type="component" value="Unplaced"/>
</dbReference>
<dbReference type="Proteomes" id="UP000314985">
    <property type="component" value="Unplaced"/>
</dbReference>
<dbReference type="Proteomes" id="UP000694570">
    <property type="component" value="Unplaced"/>
</dbReference>
<dbReference type="Proteomes" id="UP000694571">
    <property type="component" value="Unplaced"/>
</dbReference>
<dbReference type="Proteomes" id="UP000694720">
    <property type="component" value="Unplaced"/>
</dbReference>
<dbReference type="Proteomes" id="UP000694722">
    <property type="component" value="Unplaced"/>
</dbReference>
<dbReference type="Proteomes" id="UP000694723">
    <property type="component" value="Unplaced"/>
</dbReference>
<dbReference type="Proteomes" id="UP000694724">
    <property type="component" value="Unplaced"/>
</dbReference>
<dbReference type="Proteomes" id="UP000694725">
    <property type="component" value="Unplaced"/>
</dbReference>
<dbReference type="Proteomes" id="UP000694726">
    <property type="component" value="Unplaced"/>
</dbReference>
<dbReference type="Proteomes" id="UP000694727">
    <property type="component" value="Unplaced"/>
</dbReference>
<dbReference type="Proteomes" id="UP000694728">
    <property type="component" value="Unplaced"/>
</dbReference>
<dbReference type="GO" id="GO:0016324">
    <property type="term" value="C:apical plasma membrane"/>
    <property type="evidence" value="ECO:0007669"/>
    <property type="project" value="UniProtKB-SubCell"/>
</dbReference>
<dbReference type="GO" id="GO:0045121">
    <property type="term" value="C:membrane raft"/>
    <property type="evidence" value="ECO:0007669"/>
    <property type="project" value="UniProtKB-SubCell"/>
</dbReference>
<dbReference type="GO" id="GO:0005886">
    <property type="term" value="C:plasma membrane"/>
    <property type="evidence" value="ECO:0000250"/>
    <property type="project" value="UniProtKB"/>
</dbReference>
<dbReference type="GO" id="GO:0008076">
    <property type="term" value="C:voltage-gated potassium channel complex"/>
    <property type="evidence" value="ECO:0000318"/>
    <property type="project" value="GO_Central"/>
</dbReference>
<dbReference type="GO" id="GO:0005251">
    <property type="term" value="F:delayed rectifier potassium channel activity"/>
    <property type="evidence" value="ECO:0000250"/>
    <property type="project" value="UniProtKB"/>
</dbReference>
<dbReference type="GO" id="GO:0015459">
    <property type="term" value="F:potassium channel regulator activity"/>
    <property type="evidence" value="ECO:0000250"/>
    <property type="project" value="UniProtKB"/>
</dbReference>
<dbReference type="GO" id="GO:0044325">
    <property type="term" value="F:transmembrane transporter binding"/>
    <property type="evidence" value="ECO:0000318"/>
    <property type="project" value="GO_Central"/>
</dbReference>
<dbReference type="GO" id="GO:0086011">
    <property type="term" value="P:membrane repolarization during action potential"/>
    <property type="evidence" value="ECO:0000318"/>
    <property type="project" value="GO_Central"/>
</dbReference>
<dbReference type="GO" id="GO:1902260">
    <property type="term" value="P:negative regulation of delayed rectifier potassium channel activity"/>
    <property type="evidence" value="ECO:0000250"/>
    <property type="project" value="UniProtKB"/>
</dbReference>
<dbReference type="GO" id="GO:0097623">
    <property type="term" value="P:potassium ion export across plasma membrane"/>
    <property type="evidence" value="ECO:0000318"/>
    <property type="project" value="GO_Central"/>
</dbReference>
<dbReference type="GO" id="GO:0086091">
    <property type="term" value="P:regulation of heart rate by cardiac conduction"/>
    <property type="evidence" value="ECO:0000318"/>
    <property type="project" value="GO_Central"/>
</dbReference>
<dbReference type="GO" id="GO:0060307">
    <property type="term" value="P:regulation of ventricular cardiac muscle cell membrane repolarization"/>
    <property type="evidence" value="ECO:0000318"/>
    <property type="project" value="GO_Central"/>
</dbReference>
<dbReference type="GO" id="GO:0086005">
    <property type="term" value="P:ventricular cardiac muscle cell action potential"/>
    <property type="evidence" value="ECO:0000318"/>
    <property type="project" value="GO_Central"/>
</dbReference>
<dbReference type="InterPro" id="IPR000369">
    <property type="entry name" value="K_chnl_KCNE"/>
</dbReference>
<dbReference type="InterPro" id="IPR005424">
    <property type="entry name" value="KCNE1"/>
</dbReference>
<dbReference type="PANTHER" id="PTHR15282:SF11">
    <property type="entry name" value="POTASSIUM VOLTAGE-GATED CHANNEL SUBFAMILY E MEMBER 1"/>
    <property type="match status" value="1"/>
</dbReference>
<dbReference type="PANTHER" id="PTHR15282">
    <property type="entry name" value="POTASSIUM VOLTAGE-GATED CHANNEL SUBFAMILY E MEMBER 1, 3"/>
    <property type="match status" value="1"/>
</dbReference>
<dbReference type="Pfam" id="PF02060">
    <property type="entry name" value="ISK_Channel"/>
    <property type="match status" value="1"/>
</dbReference>
<dbReference type="PRINTS" id="PR01604">
    <property type="entry name" value="KCNE1CHANNEL"/>
</dbReference>
<dbReference type="PRINTS" id="PR00168">
    <property type="entry name" value="KCNECHANNEL"/>
</dbReference>
<gene>
    <name type="primary">KCNE1</name>
</gene>
<feature type="chain" id="PRO_0000144280" description="Potassium voltage-gated channel subfamily E member 1">
    <location>
        <begin position="1"/>
        <end position="130"/>
    </location>
</feature>
<feature type="transmembrane region" description="Helical" evidence="5">
    <location>
        <begin position="45"/>
        <end position="67"/>
    </location>
</feature>
<feature type="topological domain" description="Cytoplasmic" evidence="5">
    <location>
        <begin position="68"/>
        <end position="130"/>
    </location>
</feature>
<feature type="modified residue" description="Phosphoserine; by PKC" evidence="1">
    <location>
        <position position="103"/>
    </location>
</feature>
<feature type="glycosylation site" description="N-linked (GlcNAc...) asparagine" evidence="5">
    <location>
        <position position="5"/>
    </location>
</feature>
<feature type="glycosylation site" description="N-linked (GlcNAc...) asparagine" evidence="5">
    <location>
        <position position="26"/>
    </location>
</feature>
<sequence length="130" mass="14671">MALSNSTTVLPFLASLWQETDEPGGNMSADLARRSQLRDDSKLEALYILMVLGFFGFFTLGIMLSYIRSKKLEHSHDPFNVYIESDAWQEKGKALFQARVLESFRACYAIENQAAVEQPATHLPELKPLS</sequence>
<proteinExistence type="evidence at transcript level"/>
<evidence type="ECO:0000250" key="1"/>
<evidence type="ECO:0000250" key="2">
    <source>
        <dbReference type="UniProtKB" id="P15382"/>
    </source>
</evidence>
<evidence type="ECO:0000250" key="3">
    <source>
        <dbReference type="UniProtKB" id="P15383"/>
    </source>
</evidence>
<evidence type="ECO:0000250" key="4">
    <source>
        <dbReference type="UniProtKB" id="P23299"/>
    </source>
</evidence>
<evidence type="ECO:0000255" key="5"/>
<evidence type="ECO:0000305" key="6"/>
<accession>Q9TUH9</accession>
<comment type="function">
    <text evidence="2">Ancillary protein that functions as a regulatory subunit of the voltage-gated potassium (Kv) channel complex composed of pore-forming and potassium-conducting alpha subunits and of regulatory beta subunits. KCNE1 beta subunit modulates the gating kinetics and enhances stability of the channel complex. Alters the gating of the delayed rectifier Kv channel containing KCNB1 alpha subunit. Associates with KCNQ1/KVLQT1 alpha subunit to form the slowly activating delayed rectifier cardiac potassium (IKs) channel responsible for ventricular muscle action potential repolarization. The outward current reaches its steady state only after 50 seconds. Assembly with KCNH2/HERG alpha subunit Kv channel may regulate the rapidly activating component of the delayed rectifying potassium current (IKr) in heart.</text>
</comment>
<comment type="subunit">
    <text evidence="2 3 4">Interacts with KCNB1. Interacts with KCNC2 (By similarity). Associates with KCNH2/HERG. Interacts with KCNQ1; targets the complex KCNQ1-KCNE1 to the membrane raft (By similarity).</text>
</comment>
<comment type="subcellular location">
    <subcellularLocation>
        <location evidence="2 3">Cell membrane</location>
        <topology evidence="2">Single-pass type I membrane protein</topology>
    </subcellularLocation>
    <subcellularLocation>
        <location evidence="3">Apical cell membrane</location>
    </subcellularLocation>
    <subcellularLocation>
        <location evidence="2">Membrane raft</location>
    </subcellularLocation>
    <text evidence="2 3">Colocalizes with KCNB1 at the plasma membrane (By similarity). Targets to the membrane raft when associated with KCNQ1 (By similarity).</text>
</comment>
<comment type="PTM">
    <text evidence="1">Phosphorylation inhibits the potassium current.</text>
</comment>
<comment type="PTM">
    <text evidence="1">N-glycosylation at Asn-26 occurs post-translationally, and requires prior cotranslational glycosylation at Asn-5.</text>
</comment>
<comment type="similarity">
    <text evidence="6">Belongs to the potassium channel KCNE family.</text>
</comment>
<organism>
    <name type="scientific">Sus scrofa</name>
    <name type="common">Pig</name>
    <dbReference type="NCBI Taxonomy" id="9823"/>
    <lineage>
        <taxon>Eukaryota</taxon>
        <taxon>Metazoa</taxon>
        <taxon>Chordata</taxon>
        <taxon>Craniata</taxon>
        <taxon>Vertebrata</taxon>
        <taxon>Euteleostomi</taxon>
        <taxon>Mammalia</taxon>
        <taxon>Eutheria</taxon>
        <taxon>Laurasiatheria</taxon>
        <taxon>Artiodactyla</taxon>
        <taxon>Suina</taxon>
        <taxon>Suidae</taxon>
        <taxon>Sus</taxon>
    </lineage>
</organism>
<keyword id="KW-1003">Cell membrane</keyword>
<keyword id="KW-0325">Glycoprotein</keyword>
<keyword id="KW-0407">Ion channel</keyword>
<keyword id="KW-0406">Ion transport</keyword>
<keyword id="KW-0472">Membrane</keyword>
<keyword id="KW-0597">Phosphoprotein</keyword>
<keyword id="KW-0630">Potassium</keyword>
<keyword id="KW-0631">Potassium channel</keyword>
<keyword id="KW-0633">Potassium transport</keyword>
<keyword id="KW-1185">Reference proteome</keyword>
<keyword id="KW-0812">Transmembrane</keyword>
<keyword id="KW-1133">Transmembrane helix</keyword>
<keyword id="KW-0813">Transport</keyword>
<keyword id="KW-0851">Voltage-gated channel</keyword>
<reference key="1">
    <citation type="submission" date="1999-09" db="EMBL/GenBank/DDBJ databases">
        <authorList>
            <person name="Ohya S."/>
            <person name="Imaizumi Y."/>
        </authorList>
    </citation>
    <scope>NUCLEOTIDE SEQUENCE [MRNA]</scope>
    <source>
        <tissue>Coronary artery</tissue>
    </source>
</reference>